<gene>
    <name evidence="1" type="primary">aroK</name>
    <name type="ordered locus">BR2029</name>
    <name type="ordered locus">BS1330_I2023</name>
</gene>
<organism>
    <name type="scientific">Brucella suis biovar 1 (strain 1330)</name>
    <dbReference type="NCBI Taxonomy" id="204722"/>
    <lineage>
        <taxon>Bacteria</taxon>
        <taxon>Pseudomonadati</taxon>
        <taxon>Pseudomonadota</taxon>
        <taxon>Alphaproteobacteria</taxon>
        <taxon>Hyphomicrobiales</taxon>
        <taxon>Brucellaceae</taxon>
        <taxon>Brucella/Ochrobactrum group</taxon>
        <taxon>Brucella</taxon>
    </lineage>
</organism>
<comment type="function">
    <text evidence="1">Catalyzes the specific phosphorylation of the 3-hydroxyl group of shikimic acid using ATP as a cosubstrate.</text>
</comment>
<comment type="catalytic activity">
    <reaction evidence="1">
        <text>shikimate + ATP = 3-phosphoshikimate + ADP + H(+)</text>
        <dbReference type="Rhea" id="RHEA:13121"/>
        <dbReference type="ChEBI" id="CHEBI:15378"/>
        <dbReference type="ChEBI" id="CHEBI:30616"/>
        <dbReference type="ChEBI" id="CHEBI:36208"/>
        <dbReference type="ChEBI" id="CHEBI:145989"/>
        <dbReference type="ChEBI" id="CHEBI:456216"/>
        <dbReference type="EC" id="2.7.1.71"/>
    </reaction>
</comment>
<comment type="cofactor">
    <cofactor evidence="1">
        <name>Mg(2+)</name>
        <dbReference type="ChEBI" id="CHEBI:18420"/>
    </cofactor>
    <text evidence="1">Binds 1 Mg(2+) ion per subunit.</text>
</comment>
<comment type="pathway">
    <text evidence="1">Metabolic intermediate biosynthesis; chorismate biosynthesis; chorismate from D-erythrose 4-phosphate and phosphoenolpyruvate: step 5/7.</text>
</comment>
<comment type="subunit">
    <text evidence="1">Monomer.</text>
</comment>
<comment type="subcellular location">
    <subcellularLocation>
        <location evidence="1">Cytoplasm</location>
    </subcellularLocation>
</comment>
<comment type="similarity">
    <text evidence="1">Belongs to the shikimate kinase family.</text>
</comment>
<feature type="chain" id="PRO_0000237856" description="Shikimate kinase">
    <location>
        <begin position="1"/>
        <end position="200"/>
    </location>
</feature>
<feature type="binding site" evidence="1">
    <location>
        <begin position="33"/>
        <end position="38"/>
    </location>
    <ligand>
        <name>ATP</name>
        <dbReference type="ChEBI" id="CHEBI:30616"/>
    </ligand>
</feature>
<feature type="binding site" evidence="1">
    <location>
        <position position="37"/>
    </location>
    <ligand>
        <name>Mg(2+)</name>
        <dbReference type="ChEBI" id="CHEBI:18420"/>
    </ligand>
</feature>
<feature type="binding site" evidence="1">
    <location>
        <position position="55"/>
    </location>
    <ligand>
        <name>substrate</name>
    </ligand>
</feature>
<feature type="binding site" evidence="1">
    <location>
        <position position="79"/>
    </location>
    <ligand>
        <name>substrate</name>
    </ligand>
</feature>
<feature type="binding site" evidence="1">
    <location>
        <position position="101"/>
    </location>
    <ligand>
        <name>substrate</name>
    </ligand>
</feature>
<feature type="binding site" evidence="1">
    <location>
        <position position="139"/>
    </location>
    <ligand>
        <name>ATP</name>
        <dbReference type="ChEBI" id="CHEBI:30616"/>
    </ligand>
</feature>
<feature type="binding site" evidence="1">
    <location>
        <position position="158"/>
    </location>
    <ligand>
        <name>substrate</name>
    </ligand>
</feature>
<protein>
    <recommendedName>
        <fullName evidence="1">Shikimate kinase</fullName>
        <shortName evidence="1">SK</shortName>
        <ecNumber evidence="1">2.7.1.71</ecNumber>
    </recommendedName>
</protein>
<sequence>MSGTNKQTNLHRQTETIRQLLGSKVVVLVGLMGAGKSTIGRKVANMLNLPFKDADTEIETVSRMTVAELFEAYGEVEFRDLERRVILRLLDDGPMVLATGGGAYMNAETRAAIAEAGISIWINADLDVLMERVSRRQNRPLLRNSDPRGVMQRLMDERYPVYALAELHLMTRDEKKEVIAAELIEVLAAHLEKEQAASAG</sequence>
<dbReference type="EC" id="2.7.1.71" evidence="1"/>
<dbReference type="EMBL" id="AE014291">
    <property type="protein sequence ID" value="AAN30919.1"/>
    <property type="molecule type" value="Genomic_DNA"/>
</dbReference>
<dbReference type="EMBL" id="CP002997">
    <property type="protein sequence ID" value="AEM19336.1"/>
    <property type="molecule type" value="Genomic_DNA"/>
</dbReference>
<dbReference type="RefSeq" id="WP_002971869.1">
    <property type="nucleotide sequence ID" value="NZ_KN046804.1"/>
</dbReference>
<dbReference type="SMR" id="Q8FY59"/>
<dbReference type="KEGG" id="bms:BR2029"/>
<dbReference type="KEGG" id="bsi:BS1330_I2023"/>
<dbReference type="PATRIC" id="fig|204722.21.peg.3571"/>
<dbReference type="HOGENOM" id="CLU_057607_2_0_5"/>
<dbReference type="PhylomeDB" id="Q8FY59"/>
<dbReference type="UniPathway" id="UPA00053">
    <property type="reaction ID" value="UER00088"/>
</dbReference>
<dbReference type="Proteomes" id="UP000007104">
    <property type="component" value="Chromosome I"/>
</dbReference>
<dbReference type="GO" id="GO:0005829">
    <property type="term" value="C:cytosol"/>
    <property type="evidence" value="ECO:0007669"/>
    <property type="project" value="TreeGrafter"/>
</dbReference>
<dbReference type="GO" id="GO:0005524">
    <property type="term" value="F:ATP binding"/>
    <property type="evidence" value="ECO:0007669"/>
    <property type="project" value="UniProtKB-UniRule"/>
</dbReference>
<dbReference type="GO" id="GO:0000287">
    <property type="term" value="F:magnesium ion binding"/>
    <property type="evidence" value="ECO:0007669"/>
    <property type="project" value="UniProtKB-UniRule"/>
</dbReference>
<dbReference type="GO" id="GO:0004765">
    <property type="term" value="F:shikimate kinase activity"/>
    <property type="evidence" value="ECO:0007669"/>
    <property type="project" value="UniProtKB-UniRule"/>
</dbReference>
<dbReference type="GO" id="GO:0008652">
    <property type="term" value="P:amino acid biosynthetic process"/>
    <property type="evidence" value="ECO:0007669"/>
    <property type="project" value="UniProtKB-KW"/>
</dbReference>
<dbReference type="GO" id="GO:0009073">
    <property type="term" value="P:aromatic amino acid family biosynthetic process"/>
    <property type="evidence" value="ECO:0007669"/>
    <property type="project" value="UniProtKB-KW"/>
</dbReference>
<dbReference type="GO" id="GO:0009423">
    <property type="term" value="P:chorismate biosynthetic process"/>
    <property type="evidence" value="ECO:0007669"/>
    <property type="project" value="UniProtKB-UniRule"/>
</dbReference>
<dbReference type="CDD" id="cd00464">
    <property type="entry name" value="SK"/>
    <property type="match status" value="1"/>
</dbReference>
<dbReference type="Gene3D" id="3.40.50.300">
    <property type="entry name" value="P-loop containing nucleotide triphosphate hydrolases"/>
    <property type="match status" value="1"/>
</dbReference>
<dbReference type="HAMAP" id="MF_00109">
    <property type="entry name" value="Shikimate_kinase"/>
    <property type="match status" value="1"/>
</dbReference>
<dbReference type="InterPro" id="IPR027417">
    <property type="entry name" value="P-loop_NTPase"/>
</dbReference>
<dbReference type="InterPro" id="IPR031322">
    <property type="entry name" value="Shikimate/glucono_kinase"/>
</dbReference>
<dbReference type="InterPro" id="IPR000623">
    <property type="entry name" value="Shikimate_kinase/TSH1"/>
</dbReference>
<dbReference type="NCBIfam" id="NF010552">
    <property type="entry name" value="PRK13946.1"/>
    <property type="match status" value="1"/>
</dbReference>
<dbReference type="PANTHER" id="PTHR21087">
    <property type="entry name" value="SHIKIMATE KINASE"/>
    <property type="match status" value="1"/>
</dbReference>
<dbReference type="PANTHER" id="PTHR21087:SF16">
    <property type="entry name" value="SHIKIMATE KINASE 1, CHLOROPLASTIC"/>
    <property type="match status" value="1"/>
</dbReference>
<dbReference type="Pfam" id="PF01202">
    <property type="entry name" value="SKI"/>
    <property type="match status" value="1"/>
</dbReference>
<dbReference type="PRINTS" id="PR01100">
    <property type="entry name" value="SHIKIMTKNASE"/>
</dbReference>
<dbReference type="SUPFAM" id="SSF52540">
    <property type="entry name" value="P-loop containing nucleoside triphosphate hydrolases"/>
    <property type="match status" value="1"/>
</dbReference>
<accession>Q8FY59</accession>
<accession>G0K8P9</accession>
<name>AROK_BRUSU</name>
<reference key="1">
    <citation type="journal article" date="2002" name="Proc. Natl. Acad. Sci. U.S.A.">
        <title>The Brucella suis genome reveals fundamental similarities between animal and plant pathogens and symbionts.</title>
        <authorList>
            <person name="Paulsen I.T."/>
            <person name="Seshadri R."/>
            <person name="Nelson K.E."/>
            <person name="Eisen J.A."/>
            <person name="Heidelberg J.F."/>
            <person name="Read T.D."/>
            <person name="Dodson R.J."/>
            <person name="Umayam L.A."/>
            <person name="Brinkac L.M."/>
            <person name="Beanan M.J."/>
            <person name="Daugherty S.C."/>
            <person name="DeBoy R.T."/>
            <person name="Durkin A.S."/>
            <person name="Kolonay J.F."/>
            <person name="Madupu R."/>
            <person name="Nelson W.C."/>
            <person name="Ayodeji B."/>
            <person name="Kraul M."/>
            <person name="Shetty J."/>
            <person name="Malek J.A."/>
            <person name="Van Aken S.E."/>
            <person name="Riedmuller S."/>
            <person name="Tettelin H."/>
            <person name="Gill S.R."/>
            <person name="White O."/>
            <person name="Salzberg S.L."/>
            <person name="Hoover D.L."/>
            <person name="Lindler L.E."/>
            <person name="Halling S.M."/>
            <person name="Boyle S.M."/>
            <person name="Fraser C.M."/>
        </authorList>
    </citation>
    <scope>NUCLEOTIDE SEQUENCE [LARGE SCALE GENOMIC DNA]</scope>
    <source>
        <strain>1330</strain>
    </source>
</reference>
<reference key="2">
    <citation type="journal article" date="2011" name="J. Bacteriol.">
        <title>Revised genome sequence of Brucella suis 1330.</title>
        <authorList>
            <person name="Tae H."/>
            <person name="Shallom S."/>
            <person name="Settlage R."/>
            <person name="Preston D."/>
            <person name="Adams L.G."/>
            <person name="Garner H.R."/>
        </authorList>
    </citation>
    <scope>NUCLEOTIDE SEQUENCE [LARGE SCALE GENOMIC DNA]</scope>
    <source>
        <strain>1330</strain>
    </source>
</reference>
<evidence type="ECO:0000255" key="1">
    <source>
        <dbReference type="HAMAP-Rule" id="MF_00109"/>
    </source>
</evidence>
<keyword id="KW-0028">Amino-acid biosynthesis</keyword>
<keyword id="KW-0057">Aromatic amino acid biosynthesis</keyword>
<keyword id="KW-0067">ATP-binding</keyword>
<keyword id="KW-0963">Cytoplasm</keyword>
<keyword id="KW-0418">Kinase</keyword>
<keyword id="KW-0460">Magnesium</keyword>
<keyword id="KW-0479">Metal-binding</keyword>
<keyword id="KW-0547">Nucleotide-binding</keyword>
<keyword id="KW-0808">Transferase</keyword>
<proteinExistence type="inferred from homology"/>